<protein>
    <recommendedName>
        <fullName>Centlein</fullName>
    </recommendedName>
    <alternativeName>
        <fullName>Centrosomal protein</fullName>
    </alternativeName>
</protein>
<feature type="initiator methionine" description="Removed" evidence="1">
    <location>
        <position position="1"/>
    </location>
</feature>
<feature type="chain" id="PRO_0000227567" description="Centlein">
    <location>
        <begin position="2"/>
        <end position="1405"/>
    </location>
</feature>
<feature type="region of interest" description="Disordered" evidence="4">
    <location>
        <begin position="1"/>
        <end position="79"/>
    </location>
</feature>
<feature type="region of interest" description="Disordered" evidence="4">
    <location>
        <begin position="421"/>
        <end position="450"/>
    </location>
</feature>
<feature type="region of interest" description="Disordered" evidence="4">
    <location>
        <begin position="493"/>
        <end position="529"/>
    </location>
</feature>
<feature type="region of interest" description="Disordered" evidence="4">
    <location>
        <begin position="865"/>
        <end position="917"/>
    </location>
</feature>
<feature type="coiled-coil region" evidence="3">
    <location>
        <begin position="95"/>
        <end position="126"/>
    </location>
</feature>
<feature type="coiled-coil region" evidence="3">
    <location>
        <begin position="613"/>
        <end position="655"/>
    </location>
</feature>
<feature type="coiled-coil region" evidence="3">
    <location>
        <begin position="681"/>
        <end position="793"/>
    </location>
</feature>
<feature type="coiled-coil region" evidence="3">
    <location>
        <begin position="980"/>
        <end position="1311"/>
    </location>
</feature>
<feature type="compositionally biased region" description="Pro residues" evidence="4">
    <location>
        <begin position="1"/>
        <end position="14"/>
    </location>
</feature>
<feature type="compositionally biased region" description="Basic and acidic residues" evidence="4">
    <location>
        <begin position="48"/>
        <end position="58"/>
    </location>
</feature>
<feature type="compositionally biased region" description="Gly residues" evidence="4">
    <location>
        <begin position="61"/>
        <end position="71"/>
    </location>
</feature>
<feature type="compositionally biased region" description="Polar residues" evidence="4">
    <location>
        <begin position="877"/>
        <end position="895"/>
    </location>
</feature>
<feature type="compositionally biased region" description="Basic and acidic residues" evidence="4">
    <location>
        <begin position="896"/>
        <end position="907"/>
    </location>
</feature>
<feature type="modified residue" description="N-acetylalanine" evidence="1">
    <location>
        <position position="2"/>
    </location>
</feature>
<feature type="modified residue" description="Phosphoserine" evidence="1">
    <location>
        <position position="5"/>
    </location>
</feature>
<feature type="modified residue" description="Phosphoserine" evidence="9">
    <location>
        <position position="22"/>
    </location>
</feature>
<feature type="modified residue" description="Phosphothreonine" evidence="1">
    <location>
        <position position="1343"/>
    </location>
</feature>
<feature type="splice variant" id="VSP_032864" description="In isoform 3." evidence="7">
    <original>LYNELHICF</original>
    <variation>VCFYSVIKM</variation>
    <location>
        <begin position="383"/>
        <end position="391"/>
    </location>
</feature>
<feature type="splice variant" id="VSP_032865" description="In isoform 3." evidence="7">
    <location>
        <begin position="392"/>
        <end position="1405"/>
    </location>
</feature>
<feature type="splice variant" id="VSP_017558" description="In isoform 2." evidence="8">
    <original>SLTLSPRLKCNGAIVAHQNLRLPDSSSSASAS</original>
    <variation>LPFASYLLEAVLEKINEKKKLVEGYFTIMKDIR</variation>
    <location>
        <begin position="1374"/>
        <end position="1405"/>
    </location>
</feature>
<feature type="sequence variant" id="VAR_056840" description="In dbSNP:rs3808795.">
    <original>T</original>
    <variation>A</variation>
    <location>
        <position position="284"/>
    </location>
</feature>
<feature type="sequence variant" id="VAR_056841" description="In dbSNP:rs3808794.">
    <original>E</original>
    <variation>D</variation>
    <location>
        <position position="291"/>
    </location>
</feature>
<feature type="sequence variant" id="VAR_025608" description="In dbSNP:rs3808782.">
    <original>R</original>
    <variation>C</variation>
    <location>
        <position position="562"/>
    </location>
</feature>
<feature type="sequence variant" id="VAR_025609" description="In dbSNP:rs7035276." evidence="5">
    <original>T</original>
    <variation>I</variation>
    <location>
        <position position="695"/>
    </location>
</feature>
<feature type="sequence variant" id="VAR_025610" description="In dbSNP:rs2499057.">
    <original>T</original>
    <variation>A</variation>
    <location>
        <position position="1376"/>
    </location>
</feature>
<feature type="sequence conflict" description="In Ref. 1; BAB13850." evidence="8" ref="1">
    <original>R</original>
    <variation>Q</variation>
    <location>
        <position position="700"/>
    </location>
</feature>
<feature type="sequence conflict" description="In Ref. 1; BAB13850." evidence="8" ref="1">
    <location>
        <position position="871"/>
    </location>
</feature>
<feature type="sequence conflict" description="In Ref. 1; BAB13850." evidence="8" ref="1">
    <original>T</original>
    <variation>A</variation>
    <location>
        <position position="1004"/>
    </location>
</feature>
<feature type="sequence conflict" description="In Ref. 1; BAB13850." evidence="8" ref="1">
    <original>A</original>
    <variation>V</variation>
    <location>
        <position position="1240"/>
    </location>
</feature>
<feature type="sequence conflict" description="In Ref. 1; BAA91052." evidence="8" ref="1">
    <original>V</original>
    <variation>M</variation>
    <location>
        <position position="1388"/>
    </location>
</feature>
<organism>
    <name type="scientific">Homo sapiens</name>
    <name type="common">Human</name>
    <dbReference type="NCBI Taxonomy" id="9606"/>
    <lineage>
        <taxon>Eukaryota</taxon>
        <taxon>Metazoa</taxon>
        <taxon>Chordata</taxon>
        <taxon>Craniata</taxon>
        <taxon>Vertebrata</taxon>
        <taxon>Euteleostomi</taxon>
        <taxon>Mammalia</taxon>
        <taxon>Eutheria</taxon>
        <taxon>Euarchontoglires</taxon>
        <taxon>Primates</taxon>
        <taxon>Haplorrhini</taxon>
        <taxon>Catarrhini</taxon>
        <taxon>Hominidae</taxon>
        <taxon>Homo</taxon>
    </lineage>
</organism>
<evidence type="ECO:0000250" key="1">
    <source>
        <dbReference type="UniProtKB" id="A2AM05"/>
    </source>
</evidence>
<evidence type="ECO:0000250" key="2">
    <source>
        <dbReference type="UniProtKB" id="A9ZSY0"/>
    </source>
</evidence>
<evidence type="ECO:0000255" key="3"/>
<evidence type="ECO:0000256" key="4">
    <source>
        <dbReference type="SAM" id="MobiDB-lite"/>
    </source>
</evidence>
<evidence type="ECO:0000269" key="5">
    <source>
    </source>
</evidence>
<evidence type="ECO:0000269" key="6">
    <source>
    </source>
</evidence>
<evidence type="ECO:0000303" key="7">
    <source>
    </source>
</evidence>
<evidence type="ECO:0000305" key="8"/>
<evidence type="ECO:0007744" key="9">
    <source>
    </source>
</evidence>
<dbReference type="EMBL" id="AK000283">
    <property type="protein sequence ID" value="BAA91052.1"/>
    <property type="status" value="ALT_INIT"/>
    <property type="molecule type" value="mRNA"/>
</dbReference>
<dbReference type="EMBL" id="AK021596">
    <property type="protein sequence ID" value="BAB13850.1"/>
    <property type="status" value="ALT_INIT"/>
    <property type="molecule type" value="mRNA"/>
</dbReference>
<dbReference type="EMBL" id="AK098502">
    <property type="protein sequence ID" value="BAC05319.1"/>
    <property type="molecule type" value="mRNA"/>
</dbReference>
<dbReference type="EMBL" id="AL133214">
    <property type="status" value="NOT_ANNOTATED_CDS"/>
    <property type="molecule type" value="Genomic_DNA"/>
</dbReference>
<dbReference type="EMBL" id="AL162725">
    <property type="status" value="NOT_ANNOTATED_CDS"/>
    <property type="molecule type" value="Genomic_DNA"/>
</dbReference>
<dbReference type="EMBL" id="AL354711">
    <property type="status" value="NOT_ANNOTATED_CDS"/>
    <property type="molecule type" value="Genomic_DNA"/>
</dbReference>
<dbReference type="EMBL" id="AL354738">
    <property type="status" value="NOT_ANNOTATED_CDS"/>
    <property type="molecule type" value="Genomic_DNA"/>
</dbReference>
<dbReference type="EMBL" id="AL590377">
    <property type="status" value="NOT_ANNOTATED_CDS"/>
    <property type="molecule type" value="Genomic_DNA"/>
</dbReference>
<dbReference type="CCDS" id="CCDS43789.1">
    <molecule id="Q9NXG0-2"/>
</dbReference>
<dbReference type="CCDS" id="CCDS47953.1">
    <molecule id="Q9NXG0-3"/>
</dbReference>
<dbReference type="RefSeq" id="NP_001107867.1">
    <molecule id="Q9NXG0-3"/>
    <property type="nucleotide sequence ID" value="NM_001114395.3"/>
</dbReference>
<dbReference type="RefSeq" id="NP_060208.2">
    <molecule id="Q9NXG0-2"/>
    <property type="nucleotide sequence ID" value="NM_017738.4"/>
</dbReference>
<dbReference type="SMR" id="Q9NXG0"/>
<dbReference type="BioGRID" id="120223">
    <property type="interactions" value="26"/>
</dbReference>
<dbReference type="DIP" id="DIP-47295N"/>
<dbReference type="FunCoup" id="Q9NXG0">
    <property type="interactions" value="1043"/>
</dbReference>
<dbReference type="IntAct" id="Q9NXG0">
    <property type="interactions" value="17"/>
</dbReference>
<dbReference type="MINT" id="Q9NXG0"/>
<dbReference type="STRING" id="9606.ENSP00000370021"/>
<dbReference type="CarbonylDB" id="Q9NXG0"/>
<dbReference type="GlyGen" id="Q9NXG0">
    <property type="glycosylation" value="2 sites, 1 O-linked glycan (2 sites)"/>
</dbReference>
<dbReference type="iPTMnet" id="Q9NXG0"/>
<dbReference type="PhosphoSitePlus" id="Q9NXG0"/>
<dbReference type="BioMuta" id="CNTLN"/>
<dbReference type="DMDM" id="317373585"/>
<dbReference type="jPOST" id="Q9NXG0"/>
<dbReference type="MassIVE" id="Q9NXG0"/>
<dbReference type="PaxDb" id="9606-ENSP00000370021"/>
<dbReference type="PeptideAtlas" id="Q9NXG0"/>
<dbReference type="ProteomicsDB" id="83091">
    <molecule id="Q9NXG0-1"/>
</dbReference>
<dbReference type="ProteomicsDB" id="83092">
    <molecule id="Q9NXG0-2"/>
</dbReference>
<dbReference type="ProteomicsDB" id="83093">
    <molecule id="Q9NXG0-3"/>
</dbReference>
<dbReference type="Pumba" id="Q9NXG0"/>
<dbReference type="Antibodypedia" id="24606">
    <property type="antibodies" value="87 antibodies from 15 providers"/>
</dbReference>
<dbReference type="DNASU" id="54875"/>
<dbReference type="Ensembl" id="ENST00000380641.4">
    <molecule id="Q9NXG0-3"/>
    <property type="protein sequence ID" value="ENSP00000370015.3"/>
    <property type="gene ID" value="ENSG00000044459.15"/>
</dbReference>
<dbReference type="Ensembl" id="ENST00000380647.8">
    <molecule id="Q9NXG0-2"/>
    <property type="protein sequence ID" value="ENSP00000370021.3"/>
    <property type="gene ID" value="ENSG00000044459.15"/>
</dbReference>
<dbReference type="GeneID" id="54875"/>
<dbReference type="KEGG" id="hsa:54875"/>
<dbReference type="MANE-Select" id="ENST00000380647.8">
    <molecule id="Q9NXG0-2"/>
    <property type="protein sequence ID" value="ENSP00000370021.3"/>
    <property type="RefSeq nucleotide sequence ID" value="NM_017738.4"/>
    <property type="RefSeq protein sequence ID" value="NP_060208.2"/>
</dbReference>
<dbReference type="UCSC" id="uc003zmx.6">
    <molecule id="Q9NXG0-1"/>
    <property type="organism name" value="human"/>
</dbReference>
<dbReference type="AGR" id="HGNC:23432"/>
<dbReference type="CTD" id="54875"/>
<dbReference type="DisGeNET" id="54875"/>
<dbReference type="GeneCards" id="CNTLN"/>
<dbReference type="HGNC" id="HGNC:23432">
    <property type="gene designation" value="CNTLN"/>
</dbReference>
<dbReference type="HPA" id="ENSG00000044459">
    <property type="expression patterns" value="Low tissue specificity"/>
</dbReference>
<dbReference type="MIM" id="611870">
    <property type="type" value="gene"/>
</dbReference>
<dbReference type="neXtProt" id="NX_Q9NXG0"/>
<dbReference type="OpenTargets" id="ENSG00000044459"/>
<dbReference type="PharmGKB" id="PA162382646"/>
<dbReference type="VEuPathDB" id="HostDB:ENSG00000044459"/>
<dbReference type="eggNOG" id="ENOG502QRVC">
    <property type="taxonomic scope" value="Eukaryota"/>
</dbReference>
<dbReference type="GeneTree" id="ENSGT00440000034932"/>
<dbReference type="HOGENOM" id="CLU_006488_1_0_1"/>
<dbReference type="InParanoid" id="Q9NXG0"/>
<dbReference type="OMA" id="EYFTIMK"/>
<dbReference type="OrthoDB" id="10011458at2759"/>
<dbReference type="PAN-GO" id="Q9NXG0">
    <property type="GO annotations" value="4 GO annotations based on evolutionary models"/>
</dbReference>
<dbReference type="PhylomeDB" id="Q9NXG0"/>
<dbReference type="TreeFam" id="TF329190"/>
<dbReference type="PathwayCommons" id="Q9NXG0"/>
<dbReference type="SignaLink" id="Q9NXG0"/>
<dbReference type="BioGRID-ORCS" id="54875">
    <property type="hits" value="15 hits in 1157 CRISPR screens"/>
</dbReference>
<dbReference type="CD-CODE" id="8C2F96ED">
    <property type="entry name" value="Centrosome"/>
</dbReference>
<dbReference type="ChiTaRS" id="CNTLN">
    <property type="organism name" value="human"/>
</dbReference>
<dbReference type="GeneWiki" id="CNTLN"/>
<dbReference type="GenomeRNAi" id="54875"/>
<dbReference type="Pharos" id="Q9NXG0">
    <property type="development level" value="Tbio"/>
</dbReference>
<dbReference type="PRO" id="PR:Q9NXG0"/>
<dbReference type="Proteomes" id="UP000005640">
    <property type="component" value="Chromosome 9"/>
</dbReference>
<dbReference type="RNAct" id="Q9NXG0">
    <property type="molecule type" value="protein"/>
</dbReference>
<dbReference type="Bgee" id="ENSG00000044459">
    <property type="expression patterns" value="Expressed in buccal mucosa cell and 125 other cell types or tissues"/>
</dbReference>
<dbReference type="GO" id="GO:0005814">
    <property type="term" value="C:centriole"/>
    <property type="evidence" value="ECO:0000314"/>
    <property type="project" value="UniProtKB"/>
</dbReference>
<dbReference type="GO" id="GO:0005813">
    <property type="term" value="C:centrosome"/>
    <property type="evidence" value="ECO:0000314"/>
    <property type="project" value="HPA"/>
</dbReference>
<dbReference type="GO" id="GO:0005737">
    <property type="term" value="C:cytoplasm"/>
    <property type="evidence" value="ECO:0000314"/>
    <property type="project" value="UniProtKB"/>
</dbReference>
<dbReference type="GO" id="GO:0005829">
    <property type="term" value="C:cytosol"/>
    <property type="evidence" value="ECO:0000314"/>
    <property type="project" value="HPA"/>
</dbReference>
<dbReference type="GO" id="GO:0070062">
    <property type="term" value="C:extracellular exosome"/>
    <property type="evidence" value="ECO:0007005"/>
    <property type="project" value="UniProtKB"/>
</dbReference>
<dbReference type="GO" id="GO:0005654">
    <property type="term" value="C:nucleoplasm"/>
    <property type="evidence" value="ECO:0000314"/>
    <property type="project" value="HPA"/>
</dbReference>
<dbReference type="GO" id="GO:0120212">
    <property type="term" value="C:sperm head-tail coupling apparatus"/>
    <property type="evidence" value="ECO:0007669"/>
    <property type="project" value="Ensembl"/>
</dbReference>
<dbReference type="GO" id="GO:0019904">
    <property type="term" value="F:protein domain specific binding"/>
    <property type="evidence" value="ECO:0000353"/>
    <property type="project" value="UniProtKB"/>
</dbReference>
<dbReference type="GO" id="GO:0019901">
    <property type="term" value="F:protein kinase binding"/>
    <property type="evidence" value="ECO:0000353"/>
    <property type="project" value="UniProtKB"/>
</dbReference>
<dbReference type="GO" id="GO:0030674">
    <property type="term" value="F:protein-macromolecule adaptor activity"/>
    <property type="evidence" value="ECO:0000315"/>
    <property type="project" value="UniProtKB"/>
</dbReference>
<dbReference type="GO" id="GO:0010457">
    <property type="term" value="P:centriole-centriole cohesion"/>
    <property type="evidence" value="ECO:0000315"/>
    <property type="project" value="UniProtKB"/>
</dbReference>
<dbReference type="GO" id="GO:0033365">
    <property type="term" value="P:protein localization to organelle"/>
    <property type="evidence" value="ECO:0000315"/>
    <property type="project" value="UniProtKB"/>
</dbReference>
<dbReference type="GO" id="GO:0065003">
    <property type="term" value="P:protein-containing complex assembly"/>
    <property type="evidence" value="ECO:0007669"/>
    <property type="project" value="Ensembl"/>
</dbReference>
<dbReference type="GO" id="GO:0032880">
    <property type="term" value="P:regulation of protein localization"/>
    <property type="evidence" value="ECO:0007669"/>
    <property type="project" value="Ensembl"/>
</dbReference>
<dbReference type="GO" id="GO:0007338">
    <property type="term" value="P:single fertilization"/>
    <property type="evidence" value="ECO:0007669"/>
    <property type="project" value="Ensembl"/>
</dbReference>
<dbReference type="GO" id="GO:0007283">
    <property type="term" value="P:spermatogenesis"/>
    <property type="evidence" value="ECO:0007669"/>
    <property type="project" value="Ensembl"/>
</dbReference>
<dbReference type="InterPro" id="IPR038810">
    <property type="entry name" value="CNTLN"/>
</dbReference>
<dbReference type="PANTHER" id="PTHR18957">
    <property type="entry name" value="CENTLEIN"/>
    <property type="match status" value="1"/>
</dbReference>
<dbReference type="PANTHER" id="PTHR18957:SF0">
    <property type="entry name" value="CENTLEIN"/>
    <property type="match status" value="1"/>
</dbReference>
<proteinExistence type="evidence at protein level"/>
<gene>
    <name type="primary">CNTLN</name>
    <name type="synonym">C9orf101</name>
    <name type="synonym">C9orf39</name>
</gene>
<sequence length="1405" mass="161571">MAARSPPSPHPSPPARQLGPRSPRVGRGAEVHAMRSEASGFAGAAREVVADESDKIWVGEEGSGGRRGPGGAAPAHAPLLSAPMGSRRLEGISVEEAMVTRTQLLEEELSSLKEELALCQADKEFVWSLWKRLQVTNPDLTQVVSLVVEREKQKSEAKDRKVLEILQVKDAKIQEFEQRESVLKQEINDLVKRKIAVDEENAFLRKEFSDLEKKFKDKSQEIKDTKECVQNKEEQNRLVIKNLEEENKKLSTRCTDLLNDLEKLRKQEAHLRKEKYSTDAKIKTFEDNLIEARKEVEVSQSKYNALSLQLSNKQTELIQKDMDITLVRKELQELQNLYKQNSTHTAQQAELIQQLQVLNMDTQKVLRNQEDVHTAESISYQKLYNELHICFETTKSNEAMLRQSVTNLQDQLLQKEQENAKLKEKLQESQGAPLPLPQESDPDYSAQVPHRPSLSSLETLMVSQKSEIEYLQEKLKIANEKLSENISANKGFSRKSIMTSAEGKHKEPPVKRSRSLSPKSSFTDSEELQKLRKAERKIENLEKALQLKSQENDELRDAHEKRKERLQMLQTNYRAVKEQLKQWEEGSGMTEIRKIKRADPQQLRQEDSDAVWNELAYFKRENQELMIQKMNLEEELDELKVHISIDKAAIQELNRCVAERREEQLFRSGEDDEVKRSTPEKNGKEMLEQTLQKVTELENRLKSFEKRSRKLKEGNKKLMKENDFLKSLLKQQQEDTETREKELEQIIKGSKDVEKENTELQVKISELETEVTSLRRQVAEANALRNENEELINPMEKSHQSADRAKSEMATMKVRSGRYDCKTTMTKVKFKAAKKNCSVGRHHTVLNHSIKVMSNVFENLSKDGWEDVSESSSDSEAQTSQTLGTIIVETSQKISPTEDGKDQKESDPTEDSQTQGKEIVQTYLNIDGKTPKDYFHDKNAKKPTFQKKNCKMQKSSHTAVPTRVNREKYKNITAQKSSSNIILLRERIISLQQQNSVLQNAKKTAELSVKEYKEVNEKLLHQQQVSDQRFQTSRQTIKKLNLDLAGLRKEKEDLLKKLESSSEITSLAEENSQVTFPRIQVTSLSPSRSMDLEMKQLQYKLKNATNELTKQSSNVKTLKFELLAKEEHIKEMHEKISRMERDITMKRHLIEDLKFRQKVNLESNKSFSEMLQNLDKKVKTLTEECSNKKVSIDSLKQRLNVAVKEKSQYEQMYQKSKEELEKKDLKLTLLVSRISETESAMAEIETAASKQLQELALQSEQVLEGAQKTLLLANEKVEEFTTFVKALAKELQNDVHVVRRQIRELKKMKKNRDACKTSTHKAQTLAASILNISRSDLEEILDTEDQVEIEKTKIDAENDKEWMLYIQKLLEGQSLTLSPRLKCNGAIVAHQNLRLPDSSSSASAS</sequence>
<keyword id="KW-0007">Acetylation</keyword>
<keyword id="KW-0025">Alternative splicing</keyword>
<keyword id="KW-0175">Coiled coil</keyword>
<keyword id="KW-0963">Cytoplasm</keyword>
<keyword id="KW-0206">Cytoskeleton</keyword>
<keyword id="KW-0597">Phosphoprotein</keyword>
<keyword id="KW-1267">Proteomics identification</keyword>
<keyword id="KW-1185">Reference proteome</keyword>
<accession>Q9NXG0</accession>
<accession>A5Z2X6</accession>
<accession>Q5VYJ0</accession>
<accession>Q8N1G9</accession>
<accession>Q9HAJ5</accession>
<name>CNTLN_HUMAN</name>
<comment type="function">
    <text evidence="6">Required for centrosome cohesion and recruitment of CEP68 to centrosomes.</text>
</comment>
<comment type="subunit">
    <text evidence="6">Interacts with CEP250 and CEP68. Interacts with NEK2; the interaction leads to phosphorylation of CNTLN.</text>
</comment>
<comment type="interaction">
    <interactant intactId="EBI-9640137">
        <id>Q9NXG0-2</id>
    </interactant>
    <interactant intactId="EBI-749878">
        <id>Q8IYD9</id>
        <label>LAS2</label>
    </interactant>
    <organismsDiffer>false</organismsDiffer>
    <experiments>3</experiments>
</comment>
<comment type="interaction">
    <interactant intactId="EBI-9640137">
        <id>Q9NXG0-2</id>
    </interactant>
    <interactant intactId="EBI-716872">
        <id>Q969G6</id>
        <label>RFK</label>
    </interactant>
    <organismsDiffer>false</organismsDiffer>
    <experiments>3</experiments>
</comment>
<comment type="subcellular location">
    <subcellularLocation>
        <location evidence="6">Cytoplasm</location>
        <location evidence="6">Cytoskeleton</location>
        <location evidence="6">Microtubule organizing center</location>
        <location evidence="6">Centrosome</location>
        <location evidence="6">Centriole</location>
    </subcellularLocation>
    <text evidence="2 6">Colocalizes with gamma-tubulin during interphase and mitosis. Appears to associate with the mother centriole during G1 phase and with daughter centrioles towards G1/S phase (By similarity). Localizes to the proximal ends of the centrioles (PubMed:24554434). Levels are high at interphase centrosomes but are reduced on mitotic spindle poles (PubMed:24554434).</text>
</comment>
<comment type="alternative products">
    <event type="alternative splicing"/>
    <isoform>
        <id>Q9NXG0-1</id>
        <name>1</name>
        <sequence type="displayed"/>
    </isoform>
    <isoform>
        <id>Q9NXG0-2</id>
        <name>2</name>
        <sequence type="described" ref="VSP_017558"/>
    </isoform>
    <isoform>
        <id>Q9NXG0-3</id>
        <name>3</name>
        <sequence type="described" ref="VSP_032864 VSP_032865"/>
    </isoform>
</comment>
<comment type="PTM">
    <text evidence="6">Phosphorylated directly or indirectly by NEK2.</text>
</comment>
<comment type="sequence caution" evidence="8">
    <conflict type="erroneous initiation">
        <sequence resource="EMBL-CDS" id="BAA91052"/>
    </conflict>
    <text>Truncated N-terminus.</text>
</comment>
<comment type="sequence caution" evidence="8">
    <conflict type="erroneous initiation">
        <sequence resource="EMBL-CDS" id="BAB13850"/>
    </conflict>
    <text>Truncated N-terminus.</text>
</comment>
<reference key="1">
    <citation type="journal article" date="2004" name="Nat. Genet.">
        <title>Complete sequencing and characterization of 21,243 full-length human cDNAs.</title>
        <authorList>
            <person name="Ota T."/>
            <person name="Suzuki Y."/>
            <person name="Nishikawa T."/>
            <person name="Otsuki T."/>
            <person name="Sugiyama T."/>
            <person name="Irie R."/>
            <person name="Wakamatsu A."/>
            <person name="Hayashi K."/>
            <person name="Sato H."/>
            <person name="Nagai K."/>
            <person name="Kimura K."/>
            <person name="Makita H."/>
            <person name="Sekine M."/>
            <person name="Obayashi M."/>
            <person name="Nishi T."/>
            <person name="Shibahara T."/>
            <person name="Tanaka T."/>
            <person name="Ishii S."/>
            <person name="Yamamoto J."/>
            <person name="Saito K."/>
            <person name="Kawai Y."/>
            <person name="Isono Y."/>
            <person name="Nakamura Y."/>
            <person name="Nagahari K."/>
            <person name="Murakami K."/>
            <person name="Yasuda T."/>
            <person name="Iwayanagi T."/>
            <person name="Wagatsuma M."/>
            <person name="Shiratori A."/>
            <person name="Sudo H."/>
            <person name="Hosoiri T."/>
            <person name="Kaku Y."/>
            <person name="Kodaira H."/>
            <person name="Kondo H."/>
            <person name="Sugawara M."/>
            <person name="Takahashi M."/>
            <person name="Kanda K."/>
            <person name="Yokoi T."/>
            <person name="Furuya T."/>
            <person name="Kikkawa E."/>
            <person name="Omura Y."/>
            <person name="Abe K."/>
            <person name="Kamihara K."/>
            <person name="Katsuta N."/>
            <person name="Sato K."/>
            <person name="Tanikawa M."/>
            <person name="Yamazaki M."/>
            <person name="Ninomiya K."/>
            <person name="Ishibashi T."/>
            <person name="Yamashita H."/>
            <person name="Murakawa K."/>
            <person name="Fujimori K."/>
            <person name="Tanai H."/>
            <person name="Kimata M."/>
            <person name="Watanabe M."/>
            <person name="Hiraoka S."/>
            <person name="Chiba Y."/>
            <person name="Ishida S."/>
            <person name="Ono Y."/>
            <person name="Takiguchi S."/>
            <person name="Watanabe S."/>
            <person name="Yosida M."/>
            <person name="Hotuta T."/>
            <person name="Kusano J."/>
            <person name="Kanehori K."/>
            <person name="Takahashi-Fujii A."/>
            <person name="Hara H."/>
            <person name="Tanase T.-O."/>
            <person name="Nomura Y."/>
            <person name="Togiya S."/>
            <person name="Komai F."/>
            <person name="Hara R."/>
            <person name="Takeuchi K."/>
            <person name="Arita M."/>
            <person name="Imose N."/>
            <person name="Musashino K."/>
            <person name="Yuuki H."/>
            <person name="Oshima A."/>
            <person name="Sasaki N."/>
            <person name="Aotsuka S."/>
            <person name="Yoshikawa Y."/>
            <person name="Matsunawa H."/>
            <person name="Ichihara T."/>
            <person name="Shiohata N."/>
            <person name="Sano S."/>
            <person name="Moriya S."/>
            <person name="Momiyama H."/>
            <person name="Satoh N."/>
            <person name="Takami S."/>
            <person name="Terashima Y."/>
            <person name="Suzuki O."/>
            <person name="Nakagawa S."/>
            <person name="Senoh A."/>
            <person name="Mizoguchi H."/>
            <person name="Goto Y."/>
            <person name="Shimizu F."/>
            <person name="Wakebe H."/>
            <person name="Hishigaki H."/>
            <person name="Watanabe T."/>
            <person name="Sugiyama A."/>
            <person name="Takemoto M."/>
            <person name="Kawakami B."/>
            <person name="Yamazaki M."/>
            <person name="Watanabe K."/>
            <person name="Kumagai A."/>
            <person name="Itakura S."/>
            <person name="Fukuzumi Y."/>
            <person name="Fujimori Y."/>
            <person name="Komiyama M."/>
            <person name="Tashiro H."/>
            <person name="Tanigami A."/>
            <person name="Fujiwara T."/>
            <person name="Ono T."/>
            <person name="Yamada K."/>
            <person name="Fujii Y."/>
            <person name="Ozaki K."/>
            <person name="Hirao M."/>
            <person name="Ohmori Y."/>
            <person name="Kawabata A."/>
            <person name="Hikiji T."/>
            <person name="Kobatake N."/>
            <person name="Inagaki H."/>
            <person name="Ikema Y."/>
            <person name="Okamoto S."/>
            <person name="Okitani R."/>
            <person name="Kawakami T."/>
            <person name="Noguchi S."/>
            <person name="Itoh T."/>
            <person name="Shigeta K."/>
            <person name="Senba T."/>
            <person name="Matsumura K."/>
            <person name="Nakajima Y."/>
            <person name="Mizuno T."/>
            <person name="Morinaga M."/>
            <person name="Sasaki M."/>
            <person name="Togashi T."/>
            <person name="Oyama M."/>
            <person name="Hata H."/>
            <person name="Watanabe M."/>
            <person name="Komatsu T."/>
            <person name="Mizushima-Sugano J."/>
            <person name="Satoh T."/>
            <person name="Shirai Y."/>
            <person name="Takahashi Y."/>
            <person name="Nakagawa K."/>
            <person name="Okumura K."/>
            <person name="Nagase T."/>
            <person name="Nomura N."/>
            <person name="Kikuchi H."/>
            <person name="Masuho Y."/>
            <person name="Yamashita R."/>
            <person name="Nakai K."/>
            <person name="Yada T."/>
            <person name="Nakamura Y."/>
            <person name="Ohara O."/>
            <person name="Isogai T."/>
            <person name="Sugano S."/>
        </authorList>
    </citation>
    <scope>NUCLEOTIDE SEQUENCE [LARGE SCALE MRNA] (ISOFORMS 2 AND 3)</scope>
    <scope>NUCLEOTIDE SEQUENCE [LARGE SCALE MRNA] OF 278-1405 (ISOFORM 1)</scope>
    <scope>VARIANT ILE-695</scope>
    <source>
        <tissue>Embryo</tissue>
        <tissue>Gastric mucosa</tissue>
    </source>
</reference>
<reference key="2">
    <citation type="journal article" date="2004" name="Nature">
        <title>DNA sequence and analysis of human chromosome 9.</title>
        <authorList>
            <person name="Humphray S.J."/>
            <person name="Oliver K."/>
            <person name="Hunt A.R."/>
            <person name="Plumb R.W."/>
            <person name="Loveland J.E."/>
            <person name="Howe K.L."/>
            <person name="Andrews T.D."/>
            <person name="Searle S."/>
            <person name="Hunt S.E."/>
            <person name="Scott C.E."/>
            <person name="Jones M.C."/>
            <person name="Ainscough R."/>
            <person name="Almeida J.P."/>
            <person name="Ambrose K.D."/>
            <person name="Ashwell R.I.S."/>
            <person name="Babbage A.K."/>
            <person name="Babbage S."/>
            <person name="Bagguley C.L."/>
            <person name="Bailey J."/>
            <person name="Banerjee R."/>
            <person name="Barker D.J."/>
            <person name="Barlow K.F."/>
            <person name="Bates K."/>
            <person name="Beasley H."/>
            <person name="Beasley O."/>
            <person name="Bird C.P."/>
            <person name="Bray-Allen S."/>
            <person name="Brown A.J."/>
            <person name="Brown J.Y."/>
            <person name="Burford D."/>
            <person name="Burrill W."/>
            <person name="Burton J."/>
            <person name="Carder C."/>
            <person name="Carter N.P."/>
            <person name="Chapman J.C."/>
            <person name="Chen Y."/>
            <person name="Clarke G."/>
            <person name="Clark S.Y."/>
            <person name="Clee C.M."/>
            <person name="Clegg S."/>
            <person name="Collier R.E."/>
            <person name="Corby N."/>
            <person name="Crosier M."/>
            <person name="Cummings A.T."/>
            <person name="Davies J."/>
            <person name="Dhami P."/>
            <person name="Dunn M."/>
            <person name="Dutta I."/>
            <person name="Dyer L.W."/>
            <person name="Earthrowl M.E."/>
            <person name="Faulkner L."/>
            <person name="Fleming C.J."/>
            <person name="Frankish A."/>
            <person name="Frankland J.A."/>
            <person name="French L."/>
            <person name="Fricker D.G."/>
            <person name="Garner P."/>
            <person name="Garnett J."/>
            <person name="Ghori J."/>
            <person name="Gilbert J.G.R."/>
            <person name="Glison C."/>
            <person name="Grafham D.V."/>
            <person name="Gribble S."/>
            <person name="Griffiths C."/>
            <person name="Griffiths-Jones S."/>
            <person name="Grocock R."/>
            <person name="Guy J."/>
            <person name="Hall R.E."/>
            <person name="Hammond S."/>
            <person name="Harley J.L."/>
            <person name="Harrison E.S.I."/>
            <person name="Hart E.A."/>
            <person name="Heath P.D."/>
            <person name="Henderson C.D."/>
            <person name="Hopkins B.L."/>
            <person name="Howard P.J."/>
            <person name="Howden P.J."/>
            <person name="Huckle E."/>
            <person name="Johnson C."/>
            <person name="Johnson D."/>
            <person name="Joy A.A."/>
            <person name="Kay M."/>
            <person name="Keenan S."/>
            <person name="Kershaw J.K."/>
            <person name="Kimberley A.M."/>
            <person name="King A."/>
            <person name="Knights A."/>
            <person name="Laird G.K."/>
            <person name="Langford C."/>
            <person name="Lawlor S."/>
            <person name="Leongamornlert D.A."/>
            <person name="Leversha M."/>
            <person name="Lloyd C."/>
            <person name="Lloyd D.M."/>
            <person name="Lovell J."/>
            <person name="Martin S."/>
            <person name="Mashreghi-Mohammadi M."/>
            <person name="Matthews L."/>
            <person name="McLaren S."/>
            <person name="McLay K.E."/>
            <person name="McMurray A."/>
            <person name="Milne S."/>
            <person name="Nickerson T."/>
            <person name="Nisbett J."/>
            <person name="Nordsiek G."/>
            <person name="Pearce A.V."/>
            <person name="Peck A.I."/>
            <person name="Porter K.M."/>
            <person name="Pandian R."/>
            <person name="Pelan S."/>
            <person name="Phillimore B."/>
            <person name="Povey S."/>
            <person name="Ramsey Y."/>
            <person name="Rand V."/>
            <person name="Scharfe M."/>
            <person name="Sehra H.K."/>
            <person name="Shownkeen R."/>
            <person name="Sims S.K."/>
            <person name="Skuce C.D."/>
            <person name="Smith M."/>
            <person name="Steward C.A."/>
            <person name="Swarbreck D."/>
            <person name="Sycamore N."/>
            <person name="Tester J."/>
            <person name="Thorpe A."/>
            <person name="Tracey A."/>
            <person name="Tromans A."/>
            <person name="Thomas D.W."/>
            <person name="Wall M."/>
            <person name="Wallis J.M."/>
            <person name="West A.P."/>
            <person name="Whitehead S.L."/>
            <person name="Willey D.L."/>
            <person name="Williams S.A."/>
            <person name="Wilming L."/>
            <person name="Wray P.W."/>
            <person name="Young L."/>
            <person name="Ashurst J.L."/>
            <person name="Coulson A."/>
            <person name="Blocker H."/>
            <person name="Durbin R.M."/>
            <person name="Sulston J.E."/>
            <person name="Hubbard T."/>
            <person name="Jackson M.J."/>
            <person name="Bentley D.R."/>
            <person name="Beck S."/>
            <person name="Rogers J."/>
            <person name="Dunham I."/>
        </authorList>
    </citation>
    <scope>NUCLEOTIDE SEQUENCE [LARGE SCALE GENOMIC DNA]</scope>
</reference>
<reference key="3">
    <citation type="journal article" date="2013" name="J. Proteome Res.">
        <title>Toward a comprehensive characterization of a human cancer cell phosphoproteome.</title>
        <authorList>
            <person name="Zhou H."/>
            <person name="Di Palma S."/>
            <person name="Preisinger C."/>
            <person name="Peng M."/>
            <person name="Polat A.N."/>
            <person name="Heck A.J."/>
            <person name="Mohammed S."/>
        </authorList>
    </citation>
    <scope>PHOSPHORYLATION [LARGE SCALE ANALYSIS] AT SER-22</scope>
    <scope>IDENTIFICATION BY MASS SPECTROMETRY [LARGE SCALE ANALYSIS]</scope>
    <source>
        <tissue>Cervix carcinoma</tissue>
    </source>
</reference>
<reference key="4">
    <citation type="journal article" date="2014" name="J. Cell Sci.">
        <title>Centlein mediates an interaction between C-Nap1 and Cep68 to maintain centrosome cohesion.</title>
        <authorList>
            <person name="Fang G."/>
            <person name="Zhang D."/>
            <person name="Yin H."/>
            <person name="Zheng L."/>
            <person name="Bi X."/>
            <person name="Yuan L."/>
        </authorList>
    </citation>
    <scope>FUNCTION</scope>
    <scope>INTERACTION WITH CEP250; NEK2 AND CEP68</scope>
    <scope>SUBCELLULAR LOCATION</scope>
    <scope>PHOSPHORYLATION</scope>
</reference>